<sequence length="161" mass="18505">MWTKANAAGKGLLTLAAIFGFLTFVWIPSASAECQTRSIYCYECDSWTDARCKDPFNYTALPRDQPPLMTCNGCCVKMVRHQRSRYEVVRRMCTSQLQINLFMVDHVCMMESSGNGHMCFCEEDMCNSSKSLYSFANGYNHLIIITLTPWLKLLLQQFVHR</sequence>
<protein>
    <recommendedName>
        <fullName evidence="1">UPAR/Ly6 domain-containing protein qvr</fullName>
    </recommendedName>
    <alternativeName>
        <fullName evidence="1">Protein quiver</fullName>
    </alternativeName>
    <alternativeName>
        <fullName evidence="1">Protein sleepless</fullName>
    </alternativeName>
</protein>
<dbReference type="EMBL" id="CH916367">
    <property type="protein sequence ID" value="EDW01348.1"/>
    <property type="status" value="ALT_SEQ"/>
    <property type="molecule type" value="Genomic_DNA"/>
</dbReference>
<dbReference type="RefSeq" id="XP_001986481.1">
    <property type="nucleotide sequence ID" value="XM_001986445.1"/>
</dbReference>
<dbReference type="FunCoup" id="B4J8Z9">
    <property type="interactions" value="44"/>
</dbReference>
<dbReference type="STRING" id="7222.B4J8Z9"/>
<dbReference type="GlyCosmos" id="B4J8Z9">
    <property type="glycosylation" value="1 site, No reported glycans"/>
</dbReference>
<dbReference type="InParanoid" id="B4J8Z9"/>
<dbReference type="OrthoDB" id="9991292at2759"/>
<dbReference type="ChiTaRS" id="qvr">
    <property type="organism name" value="fly"/>
</dbReference>
<dbReference type="Proteomes" id="UP000001070">
    <property type="component" value="Unassembled WGS sequence"/>
</dbReference>
<dbReference type="GO" id="GO:0045121">
    <property type="term" value="C:membrane raft"/>
    <property type="evidence" value="ECO:0007669"/>
    <property type="project" value="UniProtKB-SubCell"/>
</dbReference>
<dbReference type="GO" id="GO:0005886">
    <property type="term" value="C:plasma membrane"/>
    <property type="evidence" value="ECO:0000250"/>
    <property type="project" value="UniProtKB"/>
</dbReference>
<dbReference type="GO" id="GO:0098552">
    <property type="term" value="C:side of membrane"/>
    <property type="evidence" value="ECO:0007669"/>
    <property type="project" value="UniProtKB-KW"/>
</dbReference>
<dbReference type="GO" id="GO:0034235">
    <property type="term" value="F:GPI anchor binding"/>
    <property type="evidence" value="ECO:0000250"/>
    <property type="project" value="UniProtKB"/>
</dbReference>
<dbReference type="GO" id="GO:0045187">
    <property type="term" value="P:regulation of circadian sleep/wake cycle, sleep"/>
    <property type="evidence" value="ECO:0000250"/>
    <property type="project" value="UniProtKB"/>
</dbReference>
<dbReference type="GO" id="GO:0032222">
    <property type="term" value="P:regulation of synaptic transmission, cholinergic"/>
    <property type="evidence" value="ECO:0007669"/>
    <property type="project" value="InterPro"/>
</dbReference>
<dbReference type="GO" id="GO:0048511">
    <property type="term" value="P:rhythmic process"/>
    <property type="evidence" value="ECO:0007669"/>
    <property type="project" value="UniProtKB-KW"/>
</dbReference>
<dbReference type="GO" id="GO:0030431">
    <property type="term" value="P:sleep"/>
    <property type="evidence" value="ECO:0007669"/>
    <property type="project" value="InterPro"/>
</dbReference>
<dbReference type="CDD" id="cd23595">
    <property type="entry name" value="TFP_LU_ECD_Qvr"/>
    <property type="match status" value="1"/>
</dbReference>
<dbReference type="InterPro" id="IPR031424">
    <property type="entry name" value="QVR-like"/>
</dbReference>
<dbReference type="InterPro" id="IPR050975">
    <property type="entry name" value="Sleep_regulator"/>
</dbReference>
<dbReference type="PANTHER" id="PTHR33562">
    <property type="entry name" value="ATILLA, ISOFORM B-RELATED-RELATED"/>
    <property type="match status" value="1"/>
</dbReference>
<dbReference type="PANTHER" id="PTHR33562:SF31">
    <property type="entry name" value="PROTEIN QUIVER"/>
    <property type="match status" value="1"/>
</dbReference>
<dbReference type="Pfam" id="PF17064">
    <property type="entry name" value="QVR"/>
    <property type="match status" value="1"/>
</dbReference>
<keyword id="KW-0090">Biological rhythms</keyword>
<keyword id="KW-1003">Cell membrane</keyword>
<keyword id="KW-1015">Disulfide bond</keyword>
<keyword id="KW-0325">Glycoprotein</keyword>
<keyword id="KW-0336">GPI-anchor</keyword>
<keyword id="KW-0449">Lipoprotein</keyword>
<keyword id="KW-0472">Membrane</keyword>
<keyword id="KW-1185">Reference proteome</keyword>
<keyword id="KW-0732">Signal</keyword>
<keyword id="KW-0812">Transmembrane</keyword>
<keyword id="KW-1133">Transmembrane helix</keyword>
<organism>
    <name type="scientific">Drosophila grimshawi</name>
    <name type="common">Hawaiian fruit fly</name>
    <name type="synonym">Idiomyia grimshawi</name>
    <dbReference type="NCBI Taxonomy" id="7222"/>
    <lineage>
        <taxon>Eukaryota</taxon>
        <taxon>Metazoa</taxon>
        <taxon>Ecdysozoa</taxon>
        <taxon>Arthropoda</taxon>
        <taxon>Hexapoda</taxon>
        <taxon>Insecta</taxon>
        <taxon>Pterygota</taxon>
        <taxon>Neoptera</taxon>
        <taxon>Endopterygota</taxon>
        <taxon>Diptera</taxon>
        <taxon>Brachycera</taxon>
        <taxon>Muscomorpha</taxon>
        <taxon>Ephydroidea</taxon>
        <taxon>Drosophilidae</taxon>
        <taxon>Drosophila</taxon>
        <taxon>Hawaiian Drosophila</taxon>
    </lineage>
</organism>
<accession>B4J8Z9</accession>
<proteinExistence type="inferred from homology"/>
<name>QVR_DROGR</name>
<comment type="function">
    <text evidence="1">Bifunctional regulator of neuronal activity in the mushroom body, and possibly other regions of the brain, that acts as a signaling molecule required for homeostatic regulation of sleep under normal conditions and after sleep deprivation. Reduces neuronal excitability by enhancing Sh/shaker K(+) channel activity; possibly by stabilizing Sh/shaker to increase protein levels, accelerating its activation kinetics, slowing C-type inactivation and enhancing recovery from inactivation. Specifically affects the A-type K(+) current. Antagonizes nicotinic acetylcholine receptors (nAChRs) to reduce synaptic transmission, possibly by preventing their localization to the cell surface. Required for regulation of neuromuscular excitability and plasticity at neuromuscular junctions.</text>
</comment>
<comment type="subunit">
    <text evidence="1">Interacts (via loop 2 of the three-fingered Ly-6 domain) with Sh/shaker; this interaction may stabilize both components of the complex and may be required for targeting or retention of Sh/shaker to neural cell projections. Interacts (via loop 2 of the three-fingered Ly-6 domain) with nAChRalpha3 and potentially other nicotinic acetylcholine receptors; this interaction is required for antagonism of nicotinic acetylcholine receptors.</text>
</comment>
<comment type="subcellular location">
    <subcellularLocation>
        <location evidence="1">Cell membrane</location>
        <topology evidence="1">Lipid-anchor</topology>
        <topology evidence="1">GPI-anchor</topology>
        <orientation evidence="1">Extracellular side</orientation>
    </subcellularLocation>
    <subcellularLocation>
        <location evidence="1">Membrane raft</location>
        <topology evidence="1">Lipid-anchor</topology>
        <topology evidence="1">GPI-anchor</topology>
        <orientation evidence="1">Extracellular side</orientation>
    </subcellularLocation>
</comment>
<comment type="tissue specificity">
    <text evidence="1">Expressed in mushroom body (at protein level); overlaps with expression of Sh/shaker and nicotinic acetylcholine receptor (nAChR) components also involved in sleep regulation. Expressed in the adult brain and head. Enriched in the mushroom body, anterior optic tubercle, superior protocerebrum, antennal nerve and visual projection neuron fibers projecting into the lobula plate of the optic lobe.</text>
</comment>
<comment type="domain">
    <text evidence="1">Consists of a single Ly-6 domain, adopting a three finger fold stabilized by 5 disulfide bonds. The first loop contains a region essential for protein folding or that is required for localization to the cell surface. The second loop mediates protein-protein interactions.</text>
</comment>
<comment type="PTM">
    <text evidence="1">N-glycosylated probably on Asn-57.</text>
</comment>
<comment type="similarity">
    <text evidence="4">Belongs to the quiver family.</text>
</comment>
<comment type="sequence caution" evidence="4">
    <conflict type="erroneous gene model prediction">
        <sequence resource="EMBL-CDS" id="EDW01348"/>
    </conflict>
</comment>
<gene>
    <name evidence="1" type="primary">qvr</name>
    <name evidence="1" type="synonym">sss</name>
    <name type="ORF">GH21388</name>
</gene>
<evidence type="ECO:0000250" key="1">
    <source>
        <dbReference type="UniProtKB" id="B5A5T4"/>
    </source>
</evidence>
<evidence type="ECO:0000255" key="2"/>
<evidence type="ECO:0000255" key="3">
    <source>
        <dbReference type="PROSITE-ProRule" id="PRU00498"/>
    </source>
</evidence>
<evidence type="ECO:0000305" key="4"/>
<evidence type="ECO:0000312" key="5">
    <source>
        <dbReference type="EMBL" id="EDW01348.1"/>
    </source>
</evidence>
<feature type="signal peptide" evidence="2">
    <location>
        <begin position="1"/>
        <end position="32"/>
    </location>
</feature>
<feature type="chain" id="PRO_0000365460" description="UPAR/Ly6 domain-containing protein qvr" evidence="2">
    <location>
        <begin position="33"/>
        <end position="127"/>
    </location>
</feature>
<feature type="propeptide" id="PRO_0000365461" description="Removed in mature form" evidence="1">
    <location>
        <begin position="128"/>
        <end position="161"/>
    </location>
</feature>
<feature type="transmembrane region" description="Helical" evidence="2">
    <location>
        <begin position="135"/>
        <end position="155"/>
    </location>
</feature>
<feature type="region of interest" description="Loop 1; may be required for cell surface localization or be essential for protein folding" evidence="1">
    <location>
        <begin position="54"/>
        <end position="67"/>
    </location>
</feature>
<feature type="region of interest" description="Loop 2; required for interaction with Sh/shaker and nAChRalpha3/Nicotinic acetylcholine receptor alpha3" evidence="1">
    <location>
        <begin position="77"/>
        <end position="91"/>
    </location>
</feature>
<feature type="lipid moiety-binding region" description="GPI-anchor amidated asparagine" evidence="1">
    <location>
        <position position="127"/>
    </location>
</feature>
<feature type="glycosylation site" description="N-linked (GlcNAc...) asparagine" evidence="1 3">
    <location>
        <position position="57"/>
    </location>
</feature>
<feature type="disulfide bond" evidence="1">
    <location>
        <begin position="41"/>
        <end position="75"/>
    </location>
</feature>
<feature type="disulfide bond" evidence="1">
    <location>
        <begin position="44"/>
        <end position="52"/>
    </location>
</feature>
<feature type="disulfide bond" evidence="1">
    <location>
        <begin position="71"/>
        <end position="93"/>
    </location>
</feature>
<feature type="disulfide bond" evidence="1">
    <location>
        <begin position="108"/>
        <end position="119"/>
    </location>
</feature>
<feature type="disulfide bond" evidence="1">
    <location>
        <begin position="121"/>
        <end position="126"/>
    </location>
</feature>
<reference evidence="5" key="1">
    <citation type="journal article" date="2007" name="Nature">
        <title>Evolution of genes and genomes on the Drosophila phylogeny.</title>
        <authorList>
            <consortium name="Drosophila 12 genomes consortium"/>
        </authorList>
    </citation>
    <scope>NUCLEOTIDE SEQUENCE [LARGE SCALE GENOMIC DNA]</scope>
    <source>
        <strain evidence="5">Tucson 15287-2541.00</strain>
    </source>
</reference>